<protein>
    <recommendedName>
        <fullName evidence="1">Cytidylate kinase</fullName>
        <shortName evidence="1">CK</shortName>
        <ecNumber evidence="1">2.7.4.25</ecNumber>
    </recommendedName>
    <alternativeName>
        <fullName evidence="1">Cytidine monophosphate kinase</fullName>
        <shortName evidence="1">CMP kinase</shortName>
    </alternativeName>
</protein>
<comment type="catalytic activity">
    <reaction evidence="1">
        <text>CMP + ATP = CDP + ADP</text>
        <dbReference type="Rhea" id="RHEA:11600"/>
        <dbReference type="ChEBI" id="CHEBI:30616"/>
        <dbReference type="ChEBI" id="CHEBI:58069"/>
        <dbReference type="ChEBI" id="CHEBI:60377"/>
        <dbReference type="ChEBI" id="CHEBI:456216"/>
        <dbReference type="EC" id="2.7.4.25"/>
    </reaction>
</comment>
<comment type="catalytic activity">
    <reaction evidence="1">
        <text>dCMP + ATP = dCDP + ADP</text>
        <dbReference type="Rhea" id="RHEA:25094"/>
        <dbReference type="ChEBI" id="CHEBI:30616"/>
        <dbReference type="ChEBI" id="CHEBI:57566"/>
        <dbReference type="ChEBI" id="CHEBI:58593"/>
        <dbReference type="ChEBI" id="CHEBI:456216"/>
        <dbReference type="EC" id="2.7.4.25"/>
    </reaction>
</comment>
<comment type="subcellular location">
    <subcellularLocation>
        <location evidence="1">Cytoplasm</location>
    </subcellularLocation>
</comment>
<comment type="similarity">
    <text evidence="1">Belongs to the cytidylate kinase family. Type 1 subfamily.</text>
</comment>
<reference key="1">
    <citation type="journal article" date="2008" name="Genome Res.">
        <title>Chlamydia trachomatis: genome sequence analysis of lymphogranuloma venereum isolates.</title>
        <authorList>
            <person name="Thomson N.R."/>
            <person name="Holden M.T.G."/>
            <person name="Carder C."/>
            <person name="Lennard N."/>
            <person name="Lockey S.J."/>
            <person name="Marsh P."/>
            <person name="Skipp P."/>
            <person name="O'Connor C.D."/>
            <person name="Goodhead I."/>
            <person name="Norbertzcak H."/>
            <person name="Harris B."/>
            <person name="Ormond D."/>
            <person name="Rance R."/>
            <person name="Quail M.A."/>
            <person name="Parkhill J."/>
            <person name="Stephens R.S."/>
            <person name="Clarke I.N."/>
        </authorList>
    </citation>
    <scope>NUCLEOTIDE SEQUENCE [LARGE SCALE GENOMIC DNA]</scope>
    <source>
        <strain>UCH-1/proctitis</strain>
    </source>
</reference>
<proteinExistence type="inferred from homology"/>
<accession>B0BC90</accession>
<gene>
    <name evidence="1" type="primary">cmk</name>
    <name type="ordered locus">CTLon_0708</name>
</gene>
<name>KCY_CHLTB</name>
<keyword id="KW-0067">ATP-binding</keyword>
<keyword id="KW-0963">Cytoplasm</keyword>
<keyword id="KW-0418">Kinase</keyword>
<keyword id="KW-0547">Nucleotide-binding</keyword>
<keyword id="KW-0808">Transferase</keyword>
<sequence length="216" mass="24044">MIITIDGPSGTGKSTLAKALAQTLQFLYCNTGAMYRTLAYARLQPDWQEVPLEDFLASPPFSFSFSKDSPLQAFYGDRLLTSELSSQEVANFASLFSKEPLVRAYMQTLQKQYATVGNCVFEGRDMGSKVFPHAEVKIFLTAKPEIRAERRLKDLPQGSLPKEALMAELIARDQADQQRECDPLVIPQDAIVIDSSDLTISQILEKILPLIPSHLT</sequence>
<evidence type="ECO:0000255" key="1">
    <source>
        <dbReference type="HAMAP-Rule" id="MF_00238"/>
    </source>
</evidence>
<dbReference type="EC" id="2.7.4.25" evidence="1"/>
<dbReference type="EMBL" id="AM884177">
    <property type="protein sequence ID" value="CAP07105.1"/>
    <property type="molecule type" value="Genomic_DNA"/>
</dbReference>
<dbReference type="RefSeq" id="WP_009873821.1">
    <property type="nucleotide sequence ID" value="NC_010280.2"/>
</dbReference>
<dbReference type="SMR" id="B0BC90"/>
<dbReference type="KEGG" id="ctl:CTLon_0708"/>
<dbReference type="HOGENOM" id="CLU_079959_0_2_0"/>
<dbReference type="Proteomes" id="UP001154401">
    <property type="component" value="Chromosome"/>
</dbReference>
<dbReference type="GO" id="GO:0005737">
    <property type="term" value="C:cytoplasm"/>
    <property type="evidence" value="ECO:0007669"/>
    <property type="project" value="UniProtKB-SubCell"/>
</dbReference>
<dbReference type="GO" id="GO:0005524">
    <property type="term" value="F:ATP binding"/>
    <property type="evidence" value="ECO:0007669"/>
    <property type="project" value="UniProtKB-UniRule"/>
</dbReference>
<dbReference type="GO" id="GO:0036430">
    <property type="term" value="F:CMP kinase activity"/>
    <property type="evidence" value="ECO:0007669"/>
    <property type="project" value="RHEA"/>
</dbReference>
<dbReference type="GO" id="GO:0036431">
    <property type="term" value="F:dCMP kinase activity"/>
    <property type="evidence" value="ECO:0007669"/>
    <property type="project" value="RHEA"/>
</dbReference>
<dbReference type="GO" id="GO:0006220">
    <property type="term" value="P:pyrimidine nucleotide metabolic process"/>
    <property type="evidence" value="ECO:0007669"/>
    <property type="project" value="UniProtKB-UniRule"/>
</dbReference>
<dbReference type="CDD" id="cd02020">
    <property type="entry name" value="CMPK"/>
    <property type="match status" value="1"/>
</dbReference>
<dbReference type="FunFam" id="3.40.50.300:FF:003002">
    <property type="entry name" value="Cytidylate kinase"/>
    <property type="match status" value="1"/>
</dbReference>
<dbReference type="Gene3D" id="3.40.50.300">
    <property type="entry name" value="P-loop containing nucleotide triphosphate hydrolases"/>
    <property type="match status" value="1"/>
</dbReference>
<dbReference type="HAMAP" id="MF_00238">
    <property type="entry name" value="Cytidyl_kinase_type1"/>
    <property type="match status" value="1"/>
</dbReference>
<dbReference type="InterPro" id="IPR003136">
    <property type="entry name" value="Cytidylate_kin"/>
</dbReference>
<dbReference type="InterPro" id="IPR011994">
    <property type="entry name" value="Cytidylate_kinase_dom"/>
</dbReference>
<dbReference type="InterPro" id="IPR027417">
    <property type="entry name" value="P-loop_NTPase"/>
</dbReference>
<dbReference type="NCBIfam" id="TIGR00017">
    <property type="entry name" value="cmk"/>
    <property type="match status" value="1"/>
</dbReference>
<dbReference type="Pfam" id="PF02224">
    <property type="entry name" value="Cytidylate_kin"/>
    <property type="match status" value="1"/>
</dbReference>
<dbReference type="SUPFAM" id="SSF52540">
    <property type="entry name" value="P-loop containing nucleoside triphosphate hydrolases"/>
    <property type="match status" value="1"/>
</dbReference>
<organism>
    <name type="scientific">Chlamydia trachomatis serovar L2b (strain UCH-1/proctitis)</name>
    <dbReference type="NCBI Taxonomy" id="471473"/>
    <lineage>
        <taxon>Bacteria</taxon>
        <taxon>Pseudomonadati</taxon>
        <taxon>Chlamydiota</taxon>
        <taxon>Chlamydiia</taxon>
        <taxon>Chlamydiales</taxon>
        <taxon>Chlamydiaceae</taxon>
        <taxon>Chlamydia/Chlamydophila group</taxon>
        <taxon>Chlamydia</taxon>
    </lineage>
</organism>
<feature type="chain" id="PRO_1000100658" description="Cytidylate kinase">
    <location>
        <begin position="1"/>
        <end position="216"/>
    </location>
</feature>
<feature type="binding site" evidence="1">
    <location>
        <begin position="7"/>
        <end position="15"/>
    </location>
    <ligand>
        <name>ATP</name>
        <dbReference type="ChEBI" id="CHEBI:30616"/>
    </ligand>
</feature>